<accession>P41685</accession>
<organism>
    <name type="scientific">Felis catus</name>
    <name type="common">Cat</name>
    <name type="synonym">Felis silvestris catus</name>
    <dbReference type="NCBI Taxonomy" id="9685"/>
    <lineage>
        <taxon>Eukaryota</taxon>
        <taxon>Metazoa</taxon>
        <taxon>Chordata</taxon>
        <taxon>Craniata</taxon>
        <taxon>Vertebrata</taxon>
        <taxon>Euteleostomi</taxon>
        <taxon>Mammalia</taxon>
        <taxon>Eutheria</taxon>
        <taxon>Laurasiatheria</taxon>
        <taxon>Carnivora</taxon>
        <taxon>Feliformia</taxon>
        <taxon>Felidae</taxon>
        <taxon>Felinae</taxon>
        <taxon>Felis</taxon>
    </lineage>
</organism>
<evidence type="ECO:0000250" key="1"/>
<evidence type="ECO:0000250" key="2">
    <source>
        <dbReference type="UniProtKB" id="P02340"/>
    </source>
</evidence>
<evidence type="ECO:0000250" key="3">
    <source>
        <dbReference type="UniProtKB" id="P04637"/>
    </source>
</evidence>
<evidence type="ECO:0000250" key="4">
    <source>
        <dbReference type="UniProtKB" id="P10361"/>
    </source>
</evidence>
<evidence type="ECO:0000256" key="5">
    <source>
        <dbReference type="SAM" id="MobiDB-lite"/>
    </source>
</evidence>
<evidence type="ECO:0000305" key="6"/>
<name>P53_FELCA</name>
<proteinExistence type="evidence at transcript level"/>
<dbReference type="EMBL" id="D26608">
    <property type="protein sequence ID" value="BAA05653.1"/>
    <property type="molecule type" value="mRNA"/>
</dbReference>
<dbReference type="EMBL" id="D16460">
    <property type="protein sequence ID" value="BAA03927.1"/>
    <property type="molecule type" value="mRNA"/>
</dbReference>
<dbReference type="RefSeq" id="NP_001009294.1">
    <property type="nucleotide sequence ID" value="NM_001009294.1"/>
</dbReference>
<dbReference type="SMR" id="P41685"/>
<dbReference type="FunCoup" id="P41685">
    <property type="interactions" value="92"/>
</dbReference>
<dbReference type="STRING" id="9685.ENSFCAP00000045749"/>
<dbReference type="PaxDb" id="9685-ENSFCAP00000008925"/>
<dbReference type="Ensembl" id="ENSFCAT00000055487.1">
    <property type="protein sequence ID" value="ENSFCAP00000049466.1"/>
    <property type="gene ID" value="ENSFCAG00000009623.4"/>
</dbReference>
<dbReference type="GeneID" id="493847"/>
<dbReference type="KEGG" id="fca:493847"/>
<dbReference type="CTD" id="7157"/>
<dbReference type="VGNC" id="VGNC:97181">
    <property type="gene designation" value="TP53"/>
</dbReference>
<dbReference type="eggNOG" id="ENOG502QVY3">
    <property type="taxonomic scope" value="Eukaryota"/>
</dbReference>
<dbReference type="GeneTree" id="ENSGT00950000183153"/>
<dbReference type="HOGENOM" id="CLU_019621_0_0_1"/>
<dbReference type="InParanoid" id="P41685"/>
<dbReference type="OrthoDB" id="5915660at2759"/>
<dbReference type="TreeFam" id="TF106101"/>
<dbReference type="Proteomes" id="UP000011712">
    <property type="component" value="Chromosome E1"/>
</dbReference>
<dbReference type="Bgee" id="ENSFCAG00000009623">
    <property type="expression patterns" value="Expressed in embryonic head and 9 other cell types or tissues"/>
</dbReference>
<dbReference type="GO" id="GO:0005813">
    <property type="term" value="C:centrosome"/>
    <property type="evidence" value="ECO:0000250"/>
    <property type="project" value="UniProtKB"/>
</dbReference>
<dbReference type="GO" id="GO:0005737">
    <property type="term" value="C:cytoplasm"/>
    <property type="evidence" value="ECO:0000250"/>
    <property type="project" value="UniProtKB"/>
</dbReference>
<dbReference type="GO" id="GO:0005783">
    <property type="term" value="C:endoplasmic reticulum"/>
    <property type="evidence" value="ECO:0007669"/>
    <property type="project" value="UniProtKB-SubCell"/>
</dbReference>
<dbReference type="GO" id="GO:0005759">
    <property type="term" value="C:mitochondrial matrix"/>
    <property type="evidence" value="ECO:0007669"/>
    <property type="project" value="UniProtKB-SubCell"/>
</dbReference>
<dbReference type="GO" id="GO:0005739">
    <property type="term" value="C:mitochondrion"/>
    <property type="evidence" value="ECO:0000250"/>
    <property type="project" value="UniProtKB"/>
</dbReference>
<dbReference type="GO" id="GO:0005730">
    <property type="term" value="C:nucleolus"/>
    <property type="evidence" value="ECO:0000250"/>
    <property type="project" value="UniProtKB"/>
</dbReference>
<dbReference type="GO" id="GO:0005634">
    <property type="term" value="C:nucleus"/>
    <property type="evidence" value="ECO:0000250"/>
    <property type="project" value="UniProtKB"/>
</dbReference>
<dbReference type="GO" id="GO:0016605">
    <property type="term" value="C:PML body"/>
    <property type="evidence" value="ECO:0007669"/>
    <property type="project" value="UniProtKB-SubCell"/>
</dbReference>
<dbReference type="GO" id="GO:0036310">
    <property type="term" value="F:ATP-dependent DNA/DNA annealing activity"/>
    <property type="evidence" value="ECO:0000250"/>
    <property type="project" value="UniProtKB"/>
</dbReference>
<dbReference type="GO" id="GO:0005507">
    <property type="term" value="F:copper ion binding"/>
    <property type="evidence" value="ECO:0000250"/>
    <property type="project" value="UniProtKB"/>
</dbReference>
<dbReference type="GO" id="GO:0003677">
    <property type="term" value="F:DNA binding"/>
    <property type="evidence" value="ECO:0000250"/>
    <property type="project" value="UniProtKB"/>
</dbReference>
<dbReference type="GO" id="GO:0000981">
    <property type="term" value="F:DNA-binding transcription factor activity, RNA polymerase II-specific"/>
    <property type="evidence" value="ECO:0000250"/>
    <property type="project" value="UniProtKB"/>
</dbReference>
<dbReference type="GO" id="GO:0140693">
    <property type="term" value="F:molecular condensate scaffold activity"/>
    <property type="evidence" value="ECO:0000250"/>
    <property type="project" value="UniProtKB"/>
</dbReference>
<dbReference type="GO" id="GO:1990841">
    <property type="term" value="F:promoter-specific chromatin binding"/>
    <property type="evidence" value="ECO:0000250"/>
    <property type="project" value="UniProtKB"/>
</dbReference>
<dbReference type="GO" id="GO:0000978">
    <property type="term" value="F:RNA polymerase II cis-regulatory region sequence-specific DNA binding"/>
    <property type="evidence" value="ECO:0000250"/>
    <property type="project" value="UniProtKB"/>
</dbReference>
<dbReference type="GO" id="GO:0090398">
    <property type="term" value="P:cellular senescence"/>
    <property type="evidence" value="ECO:0000250"/>
    <property type="project" value="UniProtKB"/>
</dbReference>
<dbReference type="GO" id="GO:0048512">
    <property type="term" value="P:circadian behavior"/>
    <property type="evidence" value="ECO:0000250"/>
    <property type="project" value="UniProtKB"/>
</dbReference>
<dbReference type="GO" id="GO:0006974">
    <property type="term" value="P:DNA damage response"/>
    <property type="evidence" value="ECO:0000250"/>
    <property type="project" value="UniProtKB"/>
</dbReference>
<dbReference type="GO" id="GO:0043153">
    <property type="term" value="P:entrainment of circadian clock by photoperiod"/>
    <property type="evidence" value="ECO:0000250"/>
    <property type="project" value="UniProtKB"/>
</dbReference>
<dbReference type="GO" id="GO:0030308">
    <property type="term" value="P:negative regulation of cell growth"/>
    <property type="evidence" value="ECO:0000250"/>
    <property type="project" value="UniProtKB"/>
</dbReference>
<dbReference type="GO" id="GO:0045892">
    <property type="term" value="P:negative regulation of DNA-templated transcription"/>
    <property type="evidence" value="ECO:0000250"/>
    <property type="project" value="UniProtKB"/>
</dbReference>
<dbReference type="GO" id="GO:0006289">
    <property type="term" value="P:nucleotide-excision repair"/>
    <property type="evidence" value="ECO:0000250"/>
    <property type="project" value="UniProtKB"/>
</dbReference>
<dbReference type="GO" id="GO:0097252">
    <property type="term" value="P:oligodendrocyte apoptotic process"/>
    <property type="evidence" value="ECO:0000250"/>
    <property type="project" value="UniProtKB"/>
</dbReference>
<dbReference type="GO" id="GO:0043065">
    <property type="term" value="P:positive regulation of apoptotic process"/>
    <property type="evidence" value="ECO:0000250"/>
    <property type="project" value="UniProtKB"/>
</dbReference>
<dbReference type="GO" id="GO:2001244">
    <property type="term" value="P:positive regulation of intrinsic apoptotic signaling pathway"/>
    <property type="evidence" value="ECO:0000250"/>
    <property type="project" value="UniProtKB"/>
</dbReference>
<dbReference type="GO" id="GO:0045944">
    <property type="term" value="P:positive regulation of transcription by RNA polymerase II"/>
    <property type="evidence" value="ECO:0000250"/>
    <property type="project" value="UniProtKB"/>
</dbReference>
<dbReference type="GO" id="GO:0051262">
    <property type="term" value="P:protein tetramerization"/>
    <property type="evidence" value="ECO:0007669"/>
    <property type="project" value="InterPro"/>
</dbReference>
<dbReference type="GO" id="GO:0006357">
    <property type="term" value="P:regulation of transcription by RNA polymerase II"/>
    <property type="evidence" value="ECO:0000318"/>
    <property type="project" value="GO_Central"/>
</dbReference>
<dbReference type="CDD" id="cd08367">
    <property type="entry name" value="P53"/>
    <property type="match status" value="1"/>
</dbReference>
<dbReference type="FunFam" id="2.60.40.720:FF:000003">
    <property type="entry name" value="Cellular tumor antigen p53"/>
    <property type="match status" value="1"/>
</dbReference>
<dbReference type="FunFam" id="4.10.170.10:FF:000003">
    <property type="entry name" value="Cellular tumor antigen p53"/>
    <property type="match status" value="1"/>
</dbReference>
<dbReference type="Gene3D" id="2.60.40.720">
    <property type="match status" value="1"/>
</dbReference>
<dbReference type="Gene3D" id="6.10.50.20">
    <property type="match status" value="1"/>
</dbReference>
<dbReference type="Gene3D" id="4.10.170.10">
    <property type="entry name" value="p53-like tetramerisation domain"/>
    <property type="match status" value="1"/>
</dbReference>
<dbReference type="InterPro" id="IPR008967">
    <property type="entry name" value="p53-like_TF_DNA-bd_sf"/>
</dbReference>
<dbReference type="InterPro" id="IPR012346">
    <property type="entry name" value="p53/RUNT-type_TF_DNA-bd_sf"/>
</dbReference>
<dbReference type="InterPro" id="IPR011615">
    <property type="entry name" value="p53_DNA-bd"/>
</dbReference>
<dbReference type="InterPro" id="IPR036674">
    <property type="entry name" value="p53_tetramer_sf"/>
</dbReference>
<dbReference type="InterPro" id="IPR010991">
    <property type="entry name" value="p53_tetrameristn"/>
</dbReference>
<dbReference type="InterPro" id="IPR013872">
    <property type="entry name" value="p53_transactivation_domain"/>
</dbReference>
<dbReference type="InterPro" id="IPR002117">
    <property type="entry name" value="p53_tumour_suppressor"/>
</dbReference>
<dbReference type="PANTHER" id="PTHR11447">
    <property type="entry name" value="CELLULAR TUMOR ANTIGEN P53"/>
    <property type="match status" value="1"/>
</dbReference>
<dbReference type="PANTHER" id="PTHR11447:SF6">
    <property type="entry name" value="CELLULAR TUMOR ANTIGEN P53"/>
    <property type="match status" value="1"/>
</dbReference>
<dbReference type="Pfam" id="PF00870">
    <property type="entry name" value="P53"/>
    <property type="match status" value="1"/>
</dbReference>
<dbReference type="Pfam" id="PF08563">
    <property type="entry name" value="P53_TAD"/>
    <property type="match status" value="1"/>
</dbReference>
<dbReference type="Pfam" id="PF07710">
    <property type="entry name" value="P53_tetramer"/>
    <property type="match status" value="1"/>
</dbReference>
<dbReference type="PRINTS" id="PR00386">
    <property type="entry name" value="P53SUPPRESSR"/>
</dbReference>
<dbReference type="SUPFAM" id="SSF47719">
    <property type="entry name" value="p53 tetramerization domain"/>
    <property type="match status" value="1"/>
</dbReference>
<dbReference type="SUPFAM" id="SSF49417">
    <property type="entry name" value="p53-like transcription factors"/>
    <property type="match status" value="1"/>
</dbReference>
<dbReference type="PROSITE" id="PS00348">
    <property type="entry name" value="P53"/>
    <property type="match status" value="1"/>
</dbReference>
<reference key="1">
    <citation type="journal article" date="1994" name="Int. J. Cancer">
        <title>Cloning of feline p53 tumor-suppressor gene and its aberration in hematopoietic tumors.</title>
        <authorList>
            <person name="Okuda M."/>
            <person name="Umeda A."/>
            <person name="Sakai T."/>
            <person name="Ohashi T."/>
            <person name="Momoi Y."/>
            <person name="Youn H.Y."/>
            <person name="Watari T."/>
            <person name="Goitsuka R."/>
            <person name="Tsujimoto H."/>
            <person name="Hasegawa A."/>
        </authorList>
    </citation>
    <scope>NUCLEOTIDE SEQUENCE [MRNA]</scope>
    <source>
        <tissue>Lymph node</tissue>
    </source>
</reference>
<reference key="2">
    <citation type="journal article" date="1993" name="J. Vet. Med. Sci.">
        <title>Molecular cloning and chromosomal mapping of feline p53 tumor suppressor gene.</title>
        <authorList>
            <person name="Okuda M."/>
            <person name="Umeda A."/>
            <person name="Matsumoto Y."/>
            <person name="Momoi Y."/>
            <person name="Watari T."/>
            <person name="Goitsuka R."/>
            <person name="O'Brien S.J."/>
            <person name="Tsujimoto H."/>
            <person name="Hasegawa A."/>
        </authorList>
    </citation>
    <scope>NUCLEOTIDE SEQUENCE [MRNA] OF 34-354</scope>
</reference>
<protein>
    <recommendedName>
        <fullName>Cellular tumor antigen p53</fullName>
    </recommendedName>
    <alternativeName>
        <fullName>Tumor suppressor p53</fullName>
    </alternativeName>
</protein>
<sequence>MQEPPLELTIEPPLSQETFSELWNLLPENNVLSSELSSAMNELPLSEDVANWLDEAPDDASGMSAVPAPAAPAPATPAPAISWPLSSFVPSQKTYPGAYGFHLGFLQSGTAKSVTCTYSPPLNKLFCQLAKTCPVQLWVRSPPPPGTCVRAMAIYKKSEFMTEVVRRCPHHERCPDSSDGLAPPQHLIRVEGNLHAKYLDDRNTFRHSVVVPYEPPEVGSDCTTIHYNFMCNSSCMGGMNRRPIITIITLEDSNGKLLGRNSFEVRVCACPGRDRRTEEENFRKKGEPCPEPPPGSTKRALPPSTSSTPPQKKKPLDGEYFTLQIRGRERFEMFRELNEALELKDAQSGKEPGGSRAHSSHLKAKKGQSTSRHKKPMLKREGLDSD</sequence>
<gene>
    <name type="primary">TP53</name>
    <name type="synonym">TRP53</name>
</gene>
<comment type="function">
    <text evidence="2 3">Multifunctional transcription factor that induces cell cycle arrest, DNA repair or apoptosis upon binding to its target DNA sequence. Acts as a tumor suppressor in many tumor types; induces growth arrest or apoptosis depending on the physiological circumstances and cell type. Negatively regulates cell division by controlling expression of a set of genes required for this process. One of the activated genes is an inhibitor of cyclin-dependent kinases. Apoptosis induction seems to be mediated either by stimulation of BAX and FAS antigen expression, or by repression of Bcl-2 expression. Its pro-apoptotic activity is activated via its interaction with PPP1R13B/ASPP1 or TP53BP2/ASPP2 (By similarity). However, this activity is inhibited when the interaction with PPP1R13B/ASPP1 or TP53BP2/ASPP2 is displaced by PPP1R13L/iASPP (By similarity). In cooperation with mitochondrial PPIF is involved in activating oxidative stress-induced necrosis; the function is largely independent of transcription. Prevents CDK7 kinase activity when associated to CAK complex in response to DNA damage, thus stopping cell cycle progression. Induces the transcription of long intergenic non-coding RNA p21 (lincRNA-p21) and lincRNA-Mkln1. LincRNA-p21 participates in TP53-dependent transcriptional repression leading to apoptosis and seems to have an effect on cell-cycle regulation. Regulates the circadian clock by repressing CLOCK-BMAL1-mediated transcriptional activation of PER2.</text>
</comment>
<comment type="cofactor">
    <cofactor evidence="1">
        <name>Zn(2+)</name>
        <dbReference type="ChEBI" id="CHEBI:29105"/>
    </cofactor>
    <text evidence="1">Binds 1 zinc ion per subunit.</text>
</comment>
<comment type="subunit">
    <text evidence="2 3 4">Forms homodimers and homotetramers (By similarity). Binds DNA as a homotetramer. Interacts with AXIN1. Probably part of a complex consisting of TP53, HIPK2 and AXIN1. Interacts with histone acetyltransferases EP300 and methyltransferases HRMT1L2 and CARM1, and recruits them to promoters. Interacts (via C-terminus) with TAF1; when TAF1 is part of the TFIID complex. Interacts with ING4; this interaction may be indirect. Found in a complex with CABLES1 and TP73. Interacts with HIPK1, HIPK2, and TP53INP1. Interacts with WWOX. Interacts with USP7 and SYVN1. Interacts with HSP90AB1. Interacts with CHD8; leading to recruit histone H1 and prevent transactivation activity. Interacts with ARMC10, BANP, CDKN2AIP, NUAK1, STK11/LKB1, UHRF2 and E4F. Interacts with YWHAZ; the interaction enhances TP53 transcriptional activity. Phosphorylation of YWHAZ on 'Ser-58' inhibits this interaction. Interacts (via DNA-binding domain) with MAML1 (via N-terminus). Interacts with MKRN1. Interacts with PML (via C-terminus). Interacts with MDM2; leading to ubiquitination and proteasomal degradation of TP53. Directly interacts with FBXO42; leading to ubiquitination and degradation of TP53. Interacts (phosphorylated at Ser-15 by ATM) with the phosphatase PP2A-PPP2R5C holoenzyme; regulates stress-induced TP53-dependent inhibition of cell proliferation. Interacts with PPP2R2A. Interacts with AURKA, DAXX, BRD7 and TRIM24. Interacts (when monomethylated at Lys-375) with L3MBTL1. Interacts with GRK5. Binds to the CAK complex (CDK7, cyclin H and MAT1) in response to DNA damage. Interacts with CDK5 in neurons. Interacts with AURKB, SETD2, UHRF2 and NOC2L. Interacts (via N-terminus) with PTK2/FAK1; this promotes ubiquitination by MDM2. Interacts with PTK2B/PYK2; this promotes ubiquitination by MDM2. Interacts with PRKCG. Interacts with PPIF; the association implicates preferentially tetrameric TP53, is induced by oxidative stress and is impaired by cyclosporin A (CsA). Interacts with SNAI1; the interaction induces SNAI1 degradation via MDM2-mediated ubiquitination and inhibits SNAI1-induced cell invasion. Interacts with UBC9. Interacts with ZNF385B; the interaction is direct. Interacts (via DNA-binding domain) with ZNF385A; the interaction is direct and enhances p53/TP53 transactivation functions on cell-cycle arrest target genes, resulting in growth arrest (By similarity). Interacts with ANKRD2. Interacts with RFFL and RNF34; involved in p53/TP53 ubiquitination. Interacts with MTA1 and COP1. Interacts with CCAR2 (via N-terminus). Interacts with MORC3. Interacts (via C-terminus) with POU4F2 (via C-terminus). Interacts (via oligomerization region) with NOP53; the interaction is direct and may prevent the MDM2-mediated proteasomal degradation of TP53. Interacts with AFG1L; mediates mitochondrial translocation of TP53. Interacts with UBD (By similarity). Interacts with TAF6 (By similarity). Interacts with C10orf90/FATS; the interaction inhibits binding of TP53 and MDM2 (By similarity). Interacts with NUPR1; interaction is stress-dependent. Forms a complex with EP300 and NUPR1; this complex binds CDKN1A promoter leading to transcriptional induction of CDKN1A (By similarity). Interacts with PRMT5 in response to DNA damage; the interaction is TTC5/STRAP dependent (By similarity). Interacts with PPP1R13L (via SH3 domain and ANK repeats); the interaction inhibits pro-apoptotic activity of p53/TP53 (By similarity). Interacts with PPP1R13B/ASPP1 and TP53BP2/ASPP2; the interactions promotes pro-apoptotic activity (By similarity). When phosphorylated at Ser-15, interacts with DDX3X and gamma-tubulin (By similarity). Interacts with KAT7/HBO1; leading to inhibit histone acetyltransferase activity of KAT7/HBO1 (By similarity). Interacts with S100A4; this interaction promotes TP53 degradation (By similarity). Interacts with TTC5/STRAP; the interaction may result in increased mitochondrial-dependent apoptosis (By similarity). Interacts with NQO1; this interaction is NADH-dependent, stabilizes TP53 in response to oxidative stress and protects it from ubiquitin-independent degradation by the 20S proteasome (By similarity). Interacts with DAZAP2 at TP53 target gene promoters; the interaction is triggered by DNA damage and leads to modulation of the expression of a subset of TP53 target genes, reducing DNA damage-induced cell death by limiting the expression of cell death-mediating TP53 target genes (By similarity). Interacts (via N-terminus) with ZNF768 (via zinc-finger domains); interaction might be facilitated by TP53 oligomerization state (By similarity). Forms a ternary complex with ALDOB and G6PD; this interaction is direct. ALDOB stabilizes the complex inhibiting G6PD activity and keeping oxidative pentose phosphate metabolism in check. Interacts with MORN3; the interactions mediate post-transcriptional modifications of TP53 by MDM2 and SIRT1 (By similarity). Interacts with HSPA9/MOT-2; the interaction promotes the degradation of TP53 (By similarity). Interacts with FBXO22; this interaction promotes TP53 proteasomal degradation (By similarity).</text>
</comment>
<comment type="subcellular location">
    <subcellularLocation>
        <location evidence="3">Cytoplasm</location>
    </subcellularLocation>
    <subcellularLocation>
        <location evidence="3">Nucleus</location>
    </subcellularLocation>
    <subcellularLocation>
        <location evidence="3">Nucleus</location>
        <location evidence="3">PML body</location>
    </subcellularLocation>
    <subcellularLocation>
        <location evidence="3">Endoplasmic reticulum</location>
    </subcellularLocation>
    <subcellularLocation>
        <location evidence="3">Mitochondrion matrix</location>
    </subcellularLocation>
    <subcellularLocation>
        <location evidence="3">Cytoplasm</location>
        <location evidence="3">Cytoskeleton</location>
        <location evidence="3">Microtubule organizing center</location>
        <location evidence="3">Centrosome</location>
    </subcellularLocation>
    <text evidence="3">Interaction with BANP promotes nuclear localization. Recruited into PML bodies together with CHEK2. Translocates to mitochondria upon oxidative stress (By similarity). Translocates to mitochondria in response to mitomycin C treatment (By similarity). Competitive inhibition of TP53 interaction with HSPA9/MOT-2 by UBXN2A results in increased protein abundance and subsequent translocation of TP53 to the nucleus (By similarity).</text>
</comment>
<comment type="domain">
    <text evidence="3">The N-terminal and C-terminal disordered regions undergo liquid-liquid phase separation (LLPS) following homotetramerization and activation. Post-translational modifications, such as phosphorylation or lactylation affect the ability to undergo LLPS.</text>
</comment>
<comment type="domain">
    <text evidence="3">The nuclear export signal acts as a transcriptional repression domain. The TADI and TADII motifs (residues 17 to 25 and 48 to 56) correspond both to 9aaTAD motifs which are transactivation domains present in a large number of yeast and animal transcription factors.</text>
</comment>
<comment type="PTM">
    <text evidence="1 3">Phosphorylation on Ser residues mediates transcriptional activation. Phosphorylated on Thr-18 by VRK1, which may prevent the interaction with MDM2. Phosphorylated on Ser-20 by CHEK2 in response to DNA damage, which prevents ubiquitination by MDM2. Phosphorylated on Ser-20 by PLK3 in response to reactive oxygen species (ROS), promoting p53/TP53-mediated apoptosis. Phosphorylated on Ser-33 by CDK7 in a CAK complex in response to DNA damage. Phosphorylated by HIPK1. Phosphorylated on Ser-46 by HIPK2 upon UV irradiation. Phosphorylation on Ser-46 is required for acetylation by CREBBP. Phosphorylated on Ser-385 following UV but not gamma irradiation. Stabilized by CDK5-mediated phosphorylation in response to genotoxic and oxidative stresses at Ser-15, Ser-33 and Ser-46, leading to accumulation of p53/TP53, particularly in the nucleus, thus inducing the transactivation of p53/TP53 target genes. Phosphorylated by DYRK2 at Ser-46 in response to genotoxic stress. Phosphorylated at Ser-385 by CDK2 in response to DNA-damage (By similarity). Phosphorylation at Ser-15 is required for interaction with DDX3X and gamma-tubulin (By similarity). Phosphorylation at Ser-385 regulates its ability to undergo liquid-liquid phase separation by increasing fluidity of TP53/p53 condensates (By similarity).</text>
</comment>
<comment type="PTM">
    <text evidence="3">Monomethylated at Lys-365 by SETD7, leading to stabilization and increased transcriptional activation. Monomethylated at Lys-363 by SMYD2, leading to decreased DNA-binding activity and subsequent transcriptional regulation activity. Lys-365 monomethylation prevents interaction with SMYD2 and subsequent monomethylation at Lys-363. Dimethylated at Lys-366 by EHMT1 and EHMT2. Monomethylated at Lys-375 by KMT5A, promoting interaction with L3MBTL1 and leading to repress transcriptional activity. Demethylation of dimethylated Lys-363 by KDM1A prevents interaction with TP53BP1 and represses TP53-mediated transcriptional activation (By similarity). Monomethylated at Arg-326 and dimethylated at Arg-328 and Arg-330 by PRMT5; methylation is increased after DNA damage and might possibly affect TP53 target gene specificity (By similarity).</text>
</comment>
<comment type="PTM">
    <text evidence="1">Sumoylated with SUMO1. Sumoylated at Lys-379 by UBC9 (By similarity).</text>
</comment>
<comment type="PTM">
    <text evidence="2 3">Ubiquitinated by MDM2 and SYVN1, which leads to proteasomal degradation. Ubiquitinated by RFWD3, which works in cooperation with MDM2 and may catalyze the formation of short polyubiquitin chains on p53/TP53 that are not targeted to the proteasome. Ubiquitinated by MKRN1, which leads to proteasomal degradation. Deubiquitinated by USP10, leading to stabilize it. Ubiquitinated by TRIM24, RFFL, RNF34 and RNF125, which leads to proteasomal degradation. Ubiquitination by TOPORS induces degradation. Deubiquitination by USP7, leading to stabilize it. Ubiquitinated by COP1, which leads to proteasomal degradation (By similarity). Ubiquitination and subsequent proteasomal degradation is negatively regulated by CCAR2 (By similarity). Polyubiquitinated by C10orf90/FATS, polyubiquitination is 'Lys-48'-linkage independent and non-proteolytic, leading to TP53 stabilization (By similarity). Deubiquitinated by USP3, leading to stabilization (By similarity). Ubiquitinated by MSL2, promoting its cytoplasmic localization (By similarity). Also ubiquitinated by the SCF(FBXO22)-KDMA4A complex; leading to proteasomal degradation (By similarity).</text>
</comment>
<comment type="PTM">
    <text evidence="3">Acetylation of Lys-375 by CREBBP enhances transcriptional activity. Acetylation of Lys-375 by EP300. Deacetylation of Lys-375 by SIRT1 impairs its ability to induce proapoptotic program and modulate cell senescence. Deacetylation by SIRT2 impairs its ability to induce transcription activation in a AKT-dependent manner. Acetylation at Lys-374 increases stability. Deacetylation at Lys-374 by SIRT6 decreases its stability, thereby regulating cell senescence. Acetylated at Lys-112 by KAT5, KAT6A and KAT8; regulating its ability to induce proapoptotic program.</text>
</comment>
<comment type="PTM">
    <text evidence="3">Lactylation by AARS1 prevents ability to undergo liquid-liquid phase separation (LLPS), thereby inhibiting transcription factor activity.</text>
</comment>
<comment type="disease">
    <text>p53 is found in increased amounts in a wide variety of transformed cells. p53 is frequently mutated or inactivated in many types of cancer.</text>
</comment>
<comment type="similarity">
    <text evidence="6">Belongs to the p53 family.</text>
</comment>
<feature type="chain" id="PRO_0000185701" description="Cellular tumor antigen p53">
    <location>
        <begin position="1"/>
        <end position="386"/>
    </location>
</feature>
<feature type="DNA-binding region" evidence="3">
    <location>
        <begin position="94"/>
        <end position="285"/>
    </location>
</feature>
<feature type="region of interest" description="Interaction with CCAR2" evidence="3">
    <location>
        <begin position="1"/>
        <end position="313"/>
    </location>
</feature>
<feature type="region of interest" description="Transcription activation (acidic)">
    <location>
        <begin position="1"/>
        <end position="44"/>
    </location>
</feature>
<feature type="region of interest" description="Interaction with WWOX" evidence="1">
    <location>
        <begin position="63"/>
        <end position="102"/>
    </location>
</feature>
<feature type="region of interest" description="Interaction with HIPK1" evidence="1">
    <location>
        <begin position="92"/>
        <end position="363"/>
    </location>
</feature>
<feature type="region of interest" description="Required for interaction with ZNF385A" evidence="1">
    <location>
        <begin position="92"/>
        <end position="293"/>
    </location>
</feature>
<feature type="region of interest" description="Required for interaction with FBXO42" evidence="1">
    <location>
        <begin position="105"/>
        <end position="229"/>
    </location>
</feature>
<feature type="region of interest" description="Interaction with AXIN1" evidence="1">
    <location>
        <begin position="108"/>
        <end position="285"/>
    </location>
</feature>
<feature type="region of interest" description="Interaction with E4F1" evidence="1">
    <location>
        <begin position="249"/>
        <end position="287"/>
    </location>
</feature>
<feature type="region of interest" description="Interaction with DNA" evidence="1">
    <location>
        <begin position="266"/>
        <end position="273"/>
    </location>
</feature>
<feature type="region of interest" description="Disordered" evidence="5">
    <location>
        <begin position="275"/>
        <end position="318"/>
    </location>
</feature>
<feature type="region of interest" description="Interaction with HIPK2" evidence="1">
    <location>
        <begin position="312"/>
        <end position="353"/>
    </location>
</feature>
<feature type="region of interest" description="Oligomerization">
    <location>
        <begin position="318"/>
        <end position="349"/>
    </location>
</feature>
<feature type="region of interest" description="Disordered" evidence="5">
    <location>
        <begin position="342"/>
        <end position="386"/>
    </location>
</feature>
<feature type="region of interest" description="Interaction with USP7" evidence="1">
    <location>
        <begin position="352"/>
        <end position="356"/>
    </location>
</feature>
<feature type="region of interest" description="Basic (repression of DNA-binding)">
    <location>
        <begin position="361"/>
        <end position="380"/>
    </location>
</feature>
<feature type="short sequence motif" description="Bipartite nuclear localization signal" evidence="1">
    <location>
        <begin position="298"/>
        <end position="314"/>
    </location>
</feature>
<feature type="short sequence motif" description="Nuclear export signal" evidence="1">
    <location>
        <begin position="332"/>
        <end position="343"/>
    </location>
</feature>
<feature type="short sequence motif" description="[KR]-[STA]-K motif">
    <location>
        <begin position="363"/>
        <end position="365"/>
    </location>
</feature>
<feature type="compositionally biased region" description="Basic and acidic residues" evidence="5">
    <location>
        <begin position="275"/>
        <end position="288"/>
    </location>
</feature>
<feature type="compositionally biased region" description="Basic residues" evidence="5">
    <location>
        <begin position="358"/>
        <end position="377"/>
    </location>
</feature>
<feature type="binding site" evidence="3">
    <location>
        <position position="168"/>
    </location>
    <ligand>
        <name>Zn(2+)</name>
        <dbReference type="ChEBI" id="CHEBI:29105"/>
    </ligand>
</feature>
<feature type="binding site" evidence="3">
    <location>
        <position position="171"/>
    </location>
    <ligand>
        <name>Zn(2+)</name>
        <dbReference type="ChEBI" id="CHEBI:29105"/>
    </ligand>
</feature>
<feature type="binding site" evidence="3">
    <location>
        <position position="231"/>
    </location>
    <ligand>
        <name>Zn(2+)</name>
        <dbReference type="ChEBI" id="CHEBI:29105"/>
    </ligand>
</feature>
<feature type="binding site" evidence="3">
    <location>
        <position position="235"/>
    </location>
    <ligand>
        <name>Zn(2+)</name>
        <dbReference type="ChEBI" id="CHEBI:29105"/>
    </ligand>
</feature>
<feature type="site" description="Interaction with DNA" evidence="3">
    <location>
        <position position="112"/>
    </location>
</feature>
<feature type="modified residue" description="Phosphoserine; by CDK5, PRPK, AMPK, NUAK1 and ATM" evidence="3">
    <location>
        <position position="15"/>
    </location>
</feature>
<feature type="modified residue" description="Phosphothreonine; by CK1, VRK1 and VRK2" evidence="3">
    <location>
        <position position="18"/>
    </location>
</feature>
<feature type="modified residue" description="Phosphoserine; by CHEK2, CK1 and PLK3" evidence="3">
    <location>
        <position position="20"/>
    </location>
</feature>
<feature type="modified residue" description="Phosphoserine; by CDK5 and CDK7" evidence="3">
    <location>
        <position position="33"/>
    </location>
</feature>
<feature type="modified residue" description="Phosphoserine; by MAPKAPK5" evidence="3">
    <location>
        <position position="37"/>
    </location>
</feature>
<feature type="modified residue" description="Phosphoserine; by CDK5, DYRK2, HIPK2 and PKC/PRKCG" evidence="3">
    <location>
        <position position="46"/>
    </location>
</feature>
<feature type="modified residue" description="N6-acetyllysine" evidence="3">
    <location>
        <position position="112"/>
    </location>
</feature>
<feature type="modified residue" description="N6-lactoyllysine" evidence="3">
    <location>
        <position position="112"/>
    </location>
</feature>
<feature type="modified residue" description="N6-lactoyllysine" evidence="3">
    <location>
        <position position="131"/>
    </location>
</feature>
<feature type="modified residue" description="Phosphoserine; by AURKB" evidence="3">
    <location>
        <position position="262"/>
    </location>
</feature>
<feature type="modified residue" description="Phosphothreonine; by AURKB" evidence="3">
    <location>
        <position position="277"/>
    </location>
</feature>
<feature type="modified residue" description="N6-acetyllysine" evidence="3">
    <location>
        <position position="298"/>
    </location>
</feature>
<feature type="modified residue" description="N6-acetyllysine" evidence="2">
    <location>
        <position position="314"/>
    </location>
</feature>
<feature type="modified residue" description="Omega-N-methylarginine" evidence="3">
    <location>
        <position position="326"/>
    </location>
</feature>
<feature type="modified residue" description="Symmetric dimethylarginine" evidence="3">
    <location>
        <position position="328"/>
    </location>
</feature>
<feature type="modified residue" description="Symmetric dimethylarginine" evidence="3">
    <location>
        <position position="330"/>
    </location>
</feature>
<feature type="modified residue" description="N6,N6-dimethyllysine; alternate" evidence="3">
    <location>
        <position position="363"/>
    </location>
</feature>
<feature type="modified residue" description="N6-methyllysine; by SMYD2; alternate" evidence="3">
    <location>
        <position position="363"/>
    </location>
</feature>
<feature type="modified residue" description="N6-methyllysine; by SETD7" evidence="3">
    <location>
        <position position="365"/>
    </location>
</feature>
<feature type="modified residue" description="N6,N6-dimethyllysine; by EHMT1 and EHMT2; alternate" evidence="3">
    <location>
        <position position="366"/>
    </location>
</feature>
<feature type="modified residue" description="N6-acetyllysine; alternate" evidence="3">
    <location>
        <position position="366"/>
    </location>
</feature>
<feature type="modified residue" description="N6-acetyllysine" evidence="3">
    <location>
        <position position="374"/>
    </location>
</feature>
<feature type="modified residue" description="N6,N6-dimethyllysine; alternate" evidence="3">
    <location>
        <position position="375"/>
    </location>
</feature>
<feature type="modified residue" description="N6-acetyllysine; alternate" evidence="3">
    <location>
        <position position="375"/>
    </location>
</feature>
<feature type="modified residue" description="N6-methyllysine; by KMT5A; alternate" evidence="3">
    <location>
        <position position="375"/>
    </location>
</feature>
<feature type="modified residue" description="Phosphoserine; by CK2, CDK2 and NUAK1" evidence="3">
    <location>
        <position position="385"/>
    </location>
</feature>
<feature type="cross-link" description="Glycyl lysine isopeptide (Lys-Gly) (interchain with G-Cter in ubiquitin)" evidence="3">
    <location>
        <position position="284"/>
    </location>
</feature>
<feature type="cross-link" description="Glycyl lysine isopeptide (Lys-Gly) (interchain with G-Cter in ubiquitin)" evidence="3">
    <location>
        <position position="285"/>
    </location>
</feature>
<feature type="cross-link" description="Glycyl lysine isopeptide (Lys-Gly) (interchain with G-Cter in ubiquitin)" evidence="3">
    <location>
        <position position="344"/>
    </location>
</feature>
<feature type="cross-link" description="Glycyl lysine isopeptide (Lys-Gly) (interchain with G-Cter in ubiquitin)" evidence="3">
    <location>
        <position position="350"/>
    </location>
</feature>
<feature type="cross-link" description="Glycyl lysine isopeptide (Lys-Gly) (interchain with G-Cter in SUMO)" evidence="1">
    <location>
        <position position="379"/>
    </location>
</feature>
<feature type="sequence conflict" description="In Ref. 2; BAA03927." evidence="6" ref="2">
    <original>K</original>
    <variation>R</variation>
    <location>
        <position position="285"/>
    </location>
</feature>
<keyword id="KW-0007">Acetylation</keyword>
<keyword id="KW-0010">Activator</keyword>
<keyword id="KW-0053">Apoptosis</keyword>
<keyword id="KW-0090">Biological rhythms</keyword>
<keyword id="KW-0131">Cell cycle</keyword>
<keyword id="KW-0963">Cytoplasm</keyword>
<keyword id="KW-0206">Cytoskeleton</keyword>
<keyword id="KW-0238">DNA-binding</keyword>
<keyword id="KW-0256">Endoplasmic reticulum</keyword>
<keyword id="KW-1017">Isopeptide bond</keyword>
<keyword id="KW-0479">Metal-binding</keyword>
<keyword id="KW-0488">Methylation</keyword>
<keyword id="KW-0496">Mitochondrion</keyword>
<keyword id="KW-1210">Necrosis</keyword>
<keyword id="KW-0539">Nucleus</keyword>
<keyword id="KW-0597">Phosphoprotein</keyword>
<keyword id="KW-1185">Reference proteome</keyword>
<keyword id="KW-0678">Repressor</keyword>
<keyword id="KW-0804">Transcription</keyword>
<keyword id="KW-0805">Transcription regulation</keyword>
<keyword id="KW-0043">Tumor suppressor</keyword>
<keyword id="KW-0832">Ubl conjugation</keyword>
<keyword id="KW-0862">Zinc</keyword>